<protein>
    <recommendedName>
        <fullName evidence="2">Proton-activated chloride channel</fullName>
        <shortName evidence="2">PAC</shortName>
    </recommendedName>
    <alternativeName>
        <fullName evidence="5">Transmembrane protein 206</fullName>
    </alternativeName>
</protein>
<feature type="chain" id="PRO_0000279477" description="Proton-activated chloride channel">
    <location>
        <begin position="1"/>
        <end position="352"/>
    </location>
</feature>
<feature type="topological domain" description="Cytoplasmic" evidence="2">
    <location>
        <begin position="1"/>
        <end position="65"/>
    </location>
</feature>
<feature type="transmembrane region" description="Helical" evidence="3">
    <location>
        <begin position="66"/>
        <end position="86"/>
    </location>
</feature>
<feature type="topological domain" description="Extracellular" evidence="3">
    <location>
        <begin position="87"/>
        <end position="299"/>
    </location>
</feature>
<feature type="transmembrane region" description="Helical" evidence="3">
    <location>
        <begin position="300"/>
        <end position="320"/>
    </location>
</feature>
<feature type="topological domain" description="Cytoplasmic" evidence="2">
    <location>
        <begin position="321"/>
        <end position="352"/>
    </location>
</feature>
<feature type="region of interest" description="Disordered" evidence="4">
    <location>
        <begin position="1"/>
        <end position="55"/>
    </location>
</feature>
<feature type="compositionally biased region" description="Acidic residues" evidence="4">
    <location>
        <begin position="15"/>
        <end position="38"/>
    </location>
</feature>
<feature type="helix" evidence="6">
    <location>
        <begin position="80"/>
        <end position="98"/>
    </location>
</feature>
<feature type="strand" evidence="6">
    <location>
        <begin position="101"/>
        <end position="107"/>
    </location>
</feature>
<feature type="strand" evidence="6">
    <location>
        <begin position="116"/>
        <end position="119"/>
    </location>
</feature>
<feature type="strand" evidence="6">
    <location>
        <begin position="125"/>
        <end position="134"/>
    </location>
</feature>
<feature type="turn" evidence="6">
    <location>
        <begin position="161"/>
        <end position="163"/>
    </location>
</feature>
<feature type="strand" evidence="6">
    <location>
        <begin position="164"/>
        <end position="166"/>
    </location>
</feature>
<feature type="strand" evidence="6">
    <location>
        <begin position="171"/>
        <end position="174"/>
    </location>
</feature>
<feature type="turn" evidence="6">
    <location>
        <begin position="179"/>
        <end position="182"/>
    </location>
</feature>
<feature type="strand" evidence="6">
    <location>
        <begin position="184"/>
        <end position="190"/>
    </location>
</feature>
<feature type="strand" evidence="6">
    <location>
        <begin position="203"/>
        <end position="207"/>
    </location>
</feature>
<feature type="helix" evidence="6">
    <location>
        <begin position="210"/>
        <end position="213"/>
    </location>
</feature>
<feature type="strand" evidence="6">
    <location>
        <begin position="214"/>
        <end position="216"/>
    </location>
</feature>
<feature type="helix" evidence="6">
    <location>
        <begin position="219"/>
        <end position="228"/>
    </location>
</feature>
<feature type="strand" evidence="6">
    <location>
        <begin position="234"/>
        <end position="250"/>
    </location>
</feature>
<feature type="turn" evidence="6">
    <location>
        <begin position="252"/>
        <end position="254"/>
    </location>
</feature>
<feature type="strand" evidence="6">
    <location>
        <begin position="257"/>
        <end position="267"/>
    </location>
</feature>
<feature type="strand" evidence="6">
    <location>
        <begin position="272"/>
        <end position="274"/>
    </location>
</feature>
<feature type="strand" evidence="6">
    <location>
        <begin position="282"/>
        <end position="290"/>
    </location>
</feature>
<feature type="strand" evidence="6">
    <location>
        <begin position="294"/>
        <end position="300"/>
    </location>
</feature>
<feature type="helix" evidence="6">
    <location>
        <begin position="305"/>
        <end position="328"/>
    </location>
</feature>
<sequence length="352" mass="40977">MEAIRKELSRSYQELNEEAEPVAIDPEEAEDEEKEQEEAASAVAPDRDSDRSSPPVRFSRTCLKNFFSVLLILVYLLLMGVAVFLVYQTITDFRDKLKHPVMSVSYKEVNMYDAPGIALYPGKARLLSCEHHWYDHIPPLKDPGQPGENTCVTQDISYIDPYTNKTMKHALIVQGPRDVRRRELVFLQFHLNETKQDFSAIDYLLFSSYEAFLKSHDQVKFMQDCESSFSSWKFSGGFRTWVKMSLVKTKEEDGSQSVEFRQETSVVNFIDRRETPDKGDQLFFVVFEWKDPYIQEIQDIITANPWSMIALLCSVFLVLFKAADFAKLSVKWMIKVRRRHLKKRARELNHIS</sequence>
<organism>
    <name type="scientific">Xenopus tropicalis</name>
    <name type="common">Western clawed frog</name>
    <name type="synonym">Silurana tropicalis</name>
    <dbReference type="NCBI Taxonomy" id="8364"/>
    <lineage>
        <taxon>Eukaryota</taxon>
        <taxon>Metazoa</taxon>
        <taxon>Chordata</taxon>
        <taxon>Craniata</taxon>
        <taxon>Vertebrata</taxon>
        <taxon>Euteleostomi</taxon>
        <taxon>Amphibia</taxon>
        <taxon>Batrachia</taxon>
        <taxon>Anura</taxon>
        <taxon>Pipoidea</taxon>
        <taxon>Pipidae</taxon>
        <taxon>Xenopodinae</taxon>
        <taxon>Xenopus</taxon>
        <taxon>Silurana</taxon>
    </lineage>
</organism>
<reference key="1">
    <citation type="submission" date="2006-08" db="EMBL/GenBank/DDBJ databases">
        <authorList>
            <consortium name="NIH - Xenopus Gene Collection (XGC) project"/>
        </authorList>
    </citation>
    <scope>NUCLEOTIDE SEQUENCE [LARGE SCALE MRNA]</scope>
    <source>
        <tissue>Testis</tissue>
    </source>
</reference>
<proteinExistence type="evidence at protein level"/>
<evidence type="ECO:0000250" key="1">
    <source>
        <dbReference type="UniProtKB" id="Q7SY31"/>
    </source>
</evidence>
<evidence type="ECO:0000250" key="2">
    <source>
        <dbReference type="UniProtKB" id="Q9H813"/>
    </source>
</evidence>
<evidence type="ECO:0000255" key="3"/>
<evidence type="ECO:0000256" key="4">
    <source>
        <dbReference type="SAM" id="MobiDB-lite"/>
    </source>
</evidence>
<evidence type="ECO:0000305" key="5"/>
<evidence type="ECO:0007829" key="6">
    <source>
        <dbReference type="PDB" id="8H8F"/>
    </source>
</evidence>
<gene>
    <name evidence="2" type="primary">pacc1</name>
    <name evidence="2" type="synonym">tmem206</name>
</gene>
<accession>Q0V9Z3</accession>
<comment type="function">
    <text evidence="1">Chloride channel gated by pH that facilitates the entry of chloride ions into cells upon exposure to extracellular acidic pH.</text>
</comment>
<comment type="catalytic activity">
    <reaction evidence="2">
        <text>chloride(in) = chloride(out)</text>
        <dbReference type="Rhea" id="RHEA:29823"/>
        <dbReference type="ChEBI" id="CHEBI:17996"/>
    </reaction>
</comment>
<comment type="subcellular location">
    <subcellularLocation>
        <location evidence="2">Cell membrane</location>
        <topology evidence="2">Multi-pass membrane protein</topology>
    </subcellularLocation>
</comment>
<comment type="similarity">
    <text evidence="5">Belongs to the proton-activated chloride channel family.</text>
</comment>
<name>PACC1_XENTR</name>
<dbReference type="EMBL" id="BC121336">
    <property type="protein sequence ID" value="AAI21337.1"/>
    <property type="molecule type" value="mRNA"/>
</dbReference>
<dbReference type="RefSeq" id="NP_001072297.1">
    <property type="nucleotide sequence ID" value="NM_001078829.1"/>
</dbReference>
<dbReference type="PDB" id="8H8D">
    <property type="method" value="EM"/>
    <property type="resolution" value="4.26 A"/>
    <property type="chains" value="A/B/C=1-352"/>
</dbReference>
<dbReference type="PDB" id="8H8E">
    <property type="method" value="EM"/>
    <property type="resolution" value="3.81 A"/>
    <property type="chains" value="A/B/C/D/E/F=1-352"/>
</dbReference>
<dbReference type="PDB" id="8H8F">
    <property type="method" value="EM"/>
    <property type="resolution" value="3.48 A"/>
    <property type="chains" value="A/B/C=1-352"/>
</dbReference>
<dbReference type="PDBsum" id="8H8D"/>
<dbReference type="PDBsum" id="8H8E"/>
<dbReference type="PDBsum" id="8H8F"/>
<dbReference type="EMDB" id="EMD-34543"/>
<dbReference type="EMDB" id="EMD-34544"/>
<dbReference type="EMDB" id="EMD-34545"/>
<dbReference type="SMR" id="Q0V9Z3"/>
<dbReference type="FunCoup" id="Q0V9Z3">
    <property type="interactions" value="410"/>
</dbReference>
<dbReference type="STRING" id="8364.ENSXETP00000029401"/>
<dbReference type="PaxDb" id="8364-ENSXETP00000031387"/>
<dbReference type="GeneID" id="779750"/>
<dbReference type="KEGG" id="xtr:779750"/>
<dbReference type="AGR" id="Xenbase:XB-GENE-985604"/>
<dbReference type="CTD" id="55248"/>
<dbReference type="Xenbase" id="XB-GENE-985604">
    <property type="gene designation" value="pacc1"/>
</dbReference>
<dbReference type="eggNOG" id="ENOG502QS5H">
    <property type="taxonomic scope" value="Eukaryota"/>
</dbReference>
<dbReference type="HOGENOM" id="CLU_068069_0_0_1"/>
<dbReference type="InParanoid" id="Q0V9Z3"/>
<dbReference type="OMA" id="EFMRDCE"/>
<dbReference type="OrthoDB" id="10069062at2759"/>
<dbReference type="PhylomeDB" id="Q0V9Z3"/>
<dbReference type="Proteomes" id="UP000008143">
    <property type="component" value="Chromosome 5"/>
</dbReference>
<dbReference type="Bgee" id="ENSXETG00000014356">
    <property type="expression patterns" value="Expressed in testis and 12 other cell types or tissues"/>
</dbReference>
<dbReference type="ExpressionAtlas" id="Q0V9Z3">
    <property type="expression patterns" value="baseline"/>
</dbReference>
<dbReference type="GO" id="GO:0034707">
    <property type="term" value="C:chloride channel complex"/>
    <property type="evidence" value="ECO:0007669"/>
    <property type="project" value="UniProtKB-KW"/>
</dbReference>
<dbReference type="GO" id="GO:0005886">
    <property type="term" value="C:plasma membrane"/>
    <property type="evidence" value="ECO:0000250"/>
    <property type="project" value="UniProtKB"/>
</dbReference>
<dbReference type="GO" id="GO:0061797">
    <property type="term" value="F:pH-gated chloride channel activity"/>
    <property type="evidence" value="ECO:0000250"/>
    <property type="project" value="UniProtKB"/>
</dbReference>
<dbReference type="GO" id="GO:0006821">
    <property type="term" value="P:chloride transport"/>
    <property type="evidence" value="ECO:0000250"/>
    <property type="project" value="UniProtKB"/>
</dbReference>
<dbReference type="InterPro" id="IPR029366">
    <property type="entry name" value="TMEM206"/>
</dbReference>
<dbReference type="PANTHER" id="PTHR16087:SF0">
    <property type="entry name" value="PROTON-ACTIVATED CHLORIDE CHANNEL"/>
    <property type="match status" value="1"/>
</dbReference>
<dbReference type="PANTHER" id="PTHR16087">
    <property type="entry name" value="TRANSMEMBRANE PROTEIN 206"/>
    <property type="match status" value="1"/>
</dbReference>
<dbReference type="Pfam" id="PF15122">
    <property type="entry name" value="TMEM206"/>
    <property type="match status" value="1"/>
</dbReference>
<keyword id="KW-0002">3D-structure</keyword>
<keyword id="KW-1003">Cell membrane</keyword>
<keyword id="KW-0868">Chloride</keyword>
<keyword id="KW-0869">Chloride channel</keyword>
<keyword id="KW-0407">Ion channel</keyword>
<keyword id="KW-0406">Ion transport</keyword>
<keyword id="KW-0472">Membrane</keyword>
<keyword id="KW-1185">Reference proteome</keyword>
<keyword id="KW-0812">Transmembrane</keyword>
<keyword id="KW-1133">Transmembrane helix</keyword>
<keyword id="KW-0813">Transport</keyword>